<sequence length="618" mass="66924">MQFDDFANHVITIEAESADLEITSLVSKLLTTAGNMDDKTLSTVVRFIKGTVFPAWSSQTLDIGPALLHTTIAQAAGPNVDSADVENRLAEYGEIGAVAASYDLNGQQGLSAFTPSTPDSLTVGHVDKTLRAVASASGDGSESRRRNLLFGLFSQASSSEARVLARLILGEMRIGVGTGTVRDAIISGFIEPAADADKKTLESREDAKSVPPASQPEITNKISGDTSPNTSESVQTKKSDPDTSSNVDPSAVVERALQVSNDYGMVATIARNQGQAGLIDISLELGRPIQAMLAQAADGVDAVDTWDAVAIETKFDGARVQIHTDGESVSLYSRNMEDVTDPLPEIVEFISQKVTVPAILDAEVVAVSDDGDPLAFQEVLRRFRRKYDIDAMRESVNLNVYVFDCLHIDDADLLDIPLRERREKLRELFNTTDALSPFQLTTDPNVIAQARSKALSNGHEGVMLKDPDSTYNPGSRGQHWLKHKPDVETLDLVVTGAEWGEGRRANVFGTFVVSARTTADEQQFNSLGKVATGLTDDQLTTLTEQLRPHVRSEDGQTVMIEPAIVVEVGYEEIQRSPTYDSGFALRFPRVVGIRHDKAISDVDSLSRIKHLTTGESPD</sequence>
<name>DNLI2_HALWD</name>
<reference key="1">
    <citation type="journal article" date="2006" name="BMC Genomics">
        <title>The genome of the square archaeon Haloquadratum walsbyi: life at the limits of water activity.</title>
        <authorList>
            <person name="Bolhuis H."/>
            <person name="Palm P."/>
            <person name="Wende A."/>
            <person name="Falb M."/>
            <person name="Rampp M."/>
            <person name="Rodriguez-Valera F."/>
            <person name="Pfeiffer F."/>
            <person name="Oesterhelt D."/>
        </authorList>
    </citation>
    <scope>NUCLEOTIDE SEQUENCE [LARGE SCALE GENOMIC DNA]</scope>
    <source>
        <strain>DSM 16790 / HBSQ001</strain>
    </source>
</reference>
<dbReference type="EC" id="6.5.1.1" evidence="1"/>
<dbReference type="EMBL" id="AM180088">
    <property type="protein sequence ID" value="CAJ52770.1"/>
    <property type="molecule type" value="Genomic_DNA"/>
</dbReference>
<dbReference type="RefSeq" id="WP_011571886.1">
    <property type="nucleotide sequence ID" value="NC_008212.1"/>
</dbReference>
<dbReference type="SMR" id="Q18GX5"/>
<dbReference type="STRING" id="362976.HQ_2659A"/>
<dbReference type="GeneID" id="4194190"/>
<dbReference type="KEGG" id="hwa:HQ_2659A"/>
<dbReference type="eggNOG" id="arCOG01347">
    <property type="taxonomic scope" value="Archaea"/>
</dbReference>
<dbReference type="HOGENOM" id="CLU_005138_6_0_2"/>
<dbReference type="Proteomes" id="UP000001975">
    <property type="component" value="Chromosome"/>
</dbReference>
<dbReference type="GO" id="GO:0005524">
    <property type="term" value="F:ATP binding"/>
    <property type="evidence" value="ECO:0007669"/>
    <property type="project" value="UniProtKB-UniRule"/>
</dbReference>
<dbReference type="GO" id="GO:0003677">
    <property type="term" value="F:DNA binding"/>
    <property type="evidence" value="ECO:0007669"/>
    <property type="project" value="InterPro"/>
</dbReference>
<dbReference type="GO" id="GO:0003910">
    <property type="term" value="F:DNA ligase (ATP) activity"/>
    <property type="evidence" value="ECO:0007669"/>
    <property type="project" value="UniProtKB-UniRule"/>
</dbReference>
<dbReference type="GO" id="GO:0046872">
    <property type="term" value="F:metal ion binding"/>
    <property type="evidence" value="ECO:0007669"/>
    <property type="project" value="UniProtKB-KW"/>
</dbReference>
<dbReference type="GO" id="GO:0051301">
    <property type="term" value="P:cell division"/>
    <property type="evidence" value="ECO:0007669"/>
    <property type="project" value="UniProtKB-KW"/>
</dbReference>
<dbReference type="GO" id="GO:0071897">
    <property type="term" value="P:DNA biosynthetic process"/>
    <property type="evidence" value="ECO:0007669"/>
    <property type="project" value="InterPro"/>
</dbReference>
<dbReference type="GO" id="GO:0006310">
    <property type="term" value="P:DNA recombination"/>
    <property type="evidence" value="ECO:0007669"/>
    <property type="project" value="UniProtKB-UniRule"/>
</dbReference>
<dbReference type="GO" id="GO:0006281">
    <property type="term" value="P:DNA repair"/>
    <property type="evidence" value="ECO:0007669"/>
    <property type="project" value="UniProtKB-UniRule"/>
</dbReference>
<dbReference type="GO" id="GO:0006273">
    <property type="term" value="P:lagging strand elongation"/>
    <property type="evidence" value="ECO:0007669"/>
    <property type="project" value="TreeGrafter"/>
</dbReference>
<dbReference type="CDD" id="cd07901">
    <property type="entry name" value="Adenylation_DNA_ligase_Arch_LigB"/>
    <property type="match status" value="1"/>
</dbReference>
<dbReference type="CDD" id="cd07972">
    <property type="entry name" value="OBF_DNA_ligase_Arch_LigB"/>
    <property type="match status" value="1"/>
</dbReference>
<dbReference type="Gene3D" id="1.10.3260.10">
    <property type="entry name" value="DNA ligase, ATP-dependent, N-terminal domain"/>
    <property type="match status" value="1"/>
</dbReference>
<dbReference type="Gene3D" id="3.30.470.30">
    <property type="entry name" value="DNA ligase/mRNA capping enzyme"/>
    <property type="match status" value="1"/>
</dbReference>
<dbReference type="Gene3D" id="2.40.50.140">
    <property type="entry name" value="Nucleic acid-binding proteins"/>
    <property type="match status" value="1"/>
</dbReference>
<dbReference type="HAMAP" id="MF_00407">
    <property type="entry name" value="DNA_ligase"/>
    <property type="match status" value="1"/>
</dbReference>
<dbReference type="InterPro" id="IPR050191">
    <property type="entry name" value="ATP-dep_DNA_ligase"/>
</dbReference>
<dbReference type="InterPro" id="IPR022865">
    <property type="entry name" value="DNA_ligae_ATP-dep_bac/arc"/>
</dbReference>
<dbReference type="InterPro" id="IPR000977">
    <property type="entry name" value="DNA_ligase_ATP-dep"/>
</dbReference>
<dbReference type="InterPro" id="IPR012309">
    <property type="entry name" value="DNA_ligase_ATP-dep_C"/>
</dbReference>
<dbReference type="InterPro" id="IPR012310">
    <property type="entry name" value="DNA_ligase_ATP-dep_cent"/>
</dbReference>
<dbReference type="InterPro" id="IPR016059">
    <property type="entry name" value="DNA_ligase_ATP-dep_CS"/>
</dbReference>
<dbReference type="InterPro" id="IPR012308">
    <property type="entry name" value="DNA_ligase_ATP-dep_N"/>
</dbReference>
<dbReference type="InterPro" id="IPR036599">
    <property type="entry name" value="DNA_ligase_N_sf"/>
</dbReference>
<dbReference type="InterPro" id="IPR054890">
    <property type="entry name" value="LigA_Halo"/>
</dbReference>
<dbReference type="InterPro" id="IPR012340">
    <property type="entry name" value="NA-bd_OB-fold"/>
</dbReference>
<dbReference type="NCBIfam" id="TIGR00574">
    <property type="entry name" value="dnl1"/>
    <property type="match status" value="1"/>
</dbReference>
<dbReference type="NCBIfam" id="NF041331">
    <property type="entry name" value="LigA_Halo"/>
    <property type="match status" value="1"/>
</dbReference>
<dbReference type="PANTHER" id="PTHR45674:SF7">
    <property type="entry name" value="DNA LIGASE"/>
    <property type="match status" value="1"/>
</dbReference>
<dbReference type="PANTHER" id="PTHR45674">
    <property type="entry name" value="DNA LIGASE 1/3 FAMILY MEMBER"/>
    <property type="match status" value="1"/>
</dbReference>
<dbReference type="Pfam" id="PF04679">
    <property type="entry name" value="DNA_ligase_A_C"/>
    <property type="match status" value="1"/>
</dbReference>
<dbReference type="Pfam" id="PF01068">
    <property type="entry name" value="DNA_ligase_A_M"/>
    <property type="match status" value="1"/>
</dbReference>
<dbReference type="Pfam" id="PF04675">
    <property type="entry name" value="DNA_ligase_A_N"/>
    <property type="match status" value="1"/>
</dbReference>
<dbReference type="SUPFAM" id="SSF117018">
    <property type="entry name" value="ATP-dependent DNA ligase DNA-binding domain"/>
    <property type="match status" value="1"/>
</dbReference>
<dbReference type="SUPFAM" id="SSF56091">
    <property type="entry name" value="DNA ligase/mRNA capping enzyme, catalytic domain"/>
    <property type="match status" value="1"/>
</dbReference>
<dbReference type="SUPFAM" id="SSF50249">
    <property type="entry name" value="Nucleic acid-binding proteins"/>
    <property type="match status" value="1"/>
</dbReference>
<dbReference type="PROSITE" id="PS00697">
    <property type="entry name" value="DNA_LIGASE_A1"/>
    <property type="match status" value="1"/>
</dbReference>
<dbReference type="PROSITE" id="PS50160">
    <property type="entry name" value="DNA_LIGASE_A3"/>
    <property type="match status" value="1"/>
</dbReference>
<protein>
    <recommendedName>
        <fullName evidence="1">DNA ligase 2</fullName>
        <ecNumber evidence="1">6.5.1.1</ecNumber>
    </recommendedName>
    <alternativeName>
        <fullName evidence="1">Polydeoxyribonucleotide synthase [ATP] 2</fullName>
    </alternativeName>
</protein>
<comment type="function">
    <text evidence="1">DNA ligase that seals nicks in double-stranded DNA during DNA replication, DNA recombination and DNA repair.</text>
</comment>
<comment type="catalytic activity">
    <reaction evidence="1">
        <text>ATP + (deoxyribonucleotide)n-3'-hydroxyl + 5'-phospho-(deoxyribonucleotide)m = (deoxyribonucleotide)n+m + AMP + diphosphate.</text>
        <dbReference type="EC" id="6.5.1.1"/>
    </reaction>
</comment>
<comment type="cofactor">
    <cofactor evidence="1">
        <name>Mg(2+)</name>
        <dbReference type="ChEBI" id="CHEBI:18420"/>
    </cofactor>
</comment>
<comment type="similarity">
    <text evidence="1">Belongs to the ATP-dependent DNA ligase family.</text>
</comment>
<accession>Q18GX5</accession>
<feature type="chain" id="PRO_0000365247" description="DNA ligase 2">
    <location>
        <begin position="1"/>
        <end position="618"/>
    </location>
</feature>
<feature type="region of interest" description="Disordered" evidence="2">
    <location>
        <begin position="197"/>
        <end position="250"/>
    </location>
</feature>
<feature type="region of interest" description="Disordered" evidence="2">
    <location>
        <begin position="459"/>
        <end position="480"/>
    </location>
</feature>
<feature type="compositionally biased region" description="Basic and acidic residues" evidence="2">
    <location>
        <begin position="197"/>
        <end position="208"/>
    </location>
</feature>
<feature type="compositionally biased region" description="Polar residues" evidence="2">
    <location>
        <begin position="216"/>
        <end position="234"/>
    </location>
</feature>
<feature type="active site" description="N6-AMP-lysine intermediate" evidence="1">
    <location>
        <position position="314"/>
    </location>
</feature>
<feature type="binding site" evidence="1">
    <location>
        <position position="312"/>
    </location>
    <ligand>
        <name>ATP</name>
        <dbReference type="ChEBI" id="CHEBI:30616"/>
    </ligand>
</feature>
<feature type="binding site" evidence="1">
    <location>
        <position position="319"/>
    </location>
    <ligand>
        <name>ATP</name>
        <dbReference type="ChEBI" id="CHEBI:30616"/>
    </ligand>
</feature>
<feature type="binding site" evidence="1">
    <location>
        <position position="334"/>
    </location>
    <ligand>
        <name>ATP</name>
        <dbReference type="ChEBI" id="CHEBI:30616"/>
    </ligand>
</feature>
<feature type="binding site" evidence="1">
    <location>
        <position position="363"/>
    </location>
    <ligand>
        <name>ATP</name>
        <dbReference type="ChEBI" id="CHEBI:30616"/>
    </ligand>
</feature>
<feature type="binding site" evidence="1">
    <location>
        <position position="403"/>
    </location>
    <ligand>
        <name>ATP</name>
        <dbReference type="ChEBI" id="CHEBI:30616"/>
    </ligand>
</feature>
<feature type="binding site" evidence="1">
    <location>
        <position position="476"/>
    </location>
    <ligand>
        <name>ATP</name>
        <dbReference type="ChEBI" id="CHEBI:30616"/>
    </ligand>
</feature>
<feature type="binding site" evidence="1">
    <location>
        <position position="482"/>
    </location>
    <ligand>
        <name>ATP</name>
        <dbReference type="ChEBI" id="CHEBI:30616"/>
    </ligand>
</feature>
<proteinExistence type="inferred from homology"/>
<evidence type="ECO:0000255" key="1">
    <source>
        <dbReference type="HAMAP-Rule" id="MF_00407"/>
    </source>
</evidence>
<evidence type="ECO:0000256" key="2">
    <source>
        <dbReference type="SAM" id="MobiDB-lite"/>
    </source>
</evidence>
<organism>
    <name type="scientific">Haloquadratum walsbyi (strain DSM 16790 / HBSQ001)</name>
    <dbReference type="NCBI Taxonomy" id="362976"/>
    <lineage>
        <taxon>Archaea</taxon>
        <taxon>Methanobacteriati</taxon>
        <taxon>Methanobacteriota</taxon>
        <taxon>Stenosarchaea group</taxon>
        <taxon>Halobacteria</taxon>
        <taxon>Halobacteriales</taxon>
        <taxon>Haloferacaceae</taxon>
        <taxon>Haloquadratum</taxon>
    </lineage>
</organism>
<keyword id="KW-0067">ATP-binding</keyword>
<keyword id="KW-0131">Cell cycle</keyword>
<keyword id="KW-0132">Cell division</keyword>
<keyword id="KW-0227">DNA damage</keyword>
<keyword id="KW-0233">DNA recombination</keyword>
<keyword id="KW-0234">DNA repair</keyword>
<keyword id="KW-0235">DNA replication</keyword>
<keyword id="KW-0436">Ligase</keyword>
<keyword id="KW-0460">Magnesium</keyword>
<keyword id="KW-0479">Metal-binding</keyword>
<keyword id="KW-0547">Nucleotide-binding</keyword>
<keyword id="KW-1185">Reference proteome</keyword>
<gene>
    <name evidence="1" type="primary">lig2</name>
    <name type="ordered locus">HQ_2659A</name>
</gene>